<feature type="chain" id="PRO_0000441322" description="Male determiner protein Mdmd(III)">
    <location>
        <begin position="1"/>
        <end position="1174"/>
    </location>
</feature>
<feature type="domain" description="MIF4G" evidence="2">
    <location>
        <begin position="348"/>
        <end position="531"/>
    </location>
</feature>
<feature type="domain" description="MI" evidence="2">
    <location>
        <begin position="641"/>
        <end position="757"/>
    </location>
</feature>
<feature type="region of interest" description="Disordered" evidence="3">
    <location>
        <begin position="1"/>
        <end position="51"/>
    </location>
</feature>
<feature type="region of interest" description="Disordered" evidence="3">
    <location>
        <begin position="80"/>
        <end position="109"/>
    </location>
</feature>
<feature type="region of interest" description="Disordered" evidence="3">
    <location>
        <begin position="136"/>
        <end position="259"/>
    </location>
</feature>
<feature type="region of interest" description="Disordered" evidence="3">
    <location>
        <begin position="840"/>
        <end position="1045"/>
    </location>
</feature>
<feature type="region of interest" description="Disordered" evidence="3">
    <location>
        <begin position="1096"/>
        <end position="1133"/>
    </location>
</feature>
<feature type="compositionally biased region" description="Basic and acidic residues" evidence="3">
    <location>
        <begin position="1"/>
        <end position="15"/>
    </location>
</feature>
<feature type="compositionally biased region" description="Low complexity" evidence="3">
    <location>
        <begin position="16"/>
        <end position="35"/>
    </location>
</feature>
<feature type="compositionally biased region" description="Polar residues" evidence="3">
    <location>
        <begin position="36"/>
        <end position="47"/>
    </location>
</feature>
<feature type="compositionally biased region" description="Basic and acidic residues" evidence="3">
    <location>
        <begin position="80"/>
        <end position="92"/>
    </location>
</feature>
<feature type="compositionally biased region" description="Polar residues" evidence="3">
    <location>
        <begin position="93"/>
        <end position="102"/>
    </location>
</feature>
<feature type="compositionally biased region" description="Low complexity" evidence="3">
    <location>
        <begin position="138"/>
        <end position="153"/>
    </location>
</feature>
<feature type="compositionally biased region" description="Basic residues" evidence="3">
    <location>
        <begin position="167"/>
        <end position="180"/>
    </location>
</feature>
<feature type="compositionally biased region" description="Basic and acidic residues" evidence="3">
    <location>
        <begin position="183"/>
        <end position="200"/>
    </location>
</feature>
<feature type="compositionally biased region" description="Basic residues" evidence="3">
    <location>
        <begin position="201"/>
        <end position="223"/>
    </location>
</feature>
<feature type="compositionally biased region" description="Basic and acidic residues" evidence="3">
    <location>
        <begin position="235"/>
        <end position="259"/>
    </location>
</feature>
<feature type="compositionally biased region" description="Low complexity" evidence="3">
    <location>
        <begin position="840"/>
        <end position="857"/>
    </location>
</feature>
<feature type="compositionally biased region" description="Basic residues" evidence="3">
    <location>
        <begin position="869"/>
        <end position="909"/>
    </location>
</feature>
<feature type="compositionally biased region" description="Basic and acidic residues" evidence="3">
    <location>
        <begin position="910"/>
        <end position="924"/>
    </location>
</feature>
<feature type="compositionally biased region" description="Low complexity" evidence="3">
    <location>
        <begin position="926"/>
        <end position="957"/>
    </location>
</feature>
<feature type="compositionally biased region" description="Basic residues" evidence="3">
    <location>
        <begin position="963"/>
        <end position="1001"/>
    </location>
</feature>
<feature type="compositionally biased region" description="Low complexity" evidence="3">
    <location>
        <begin position="1010"/>
        <end position="1020"/>
    </location>
</feature>
<feature type="compositionally biased region" description="Basic residues" evidence="3">
    <location>
        <begin position="1034"/>
        <end position="1045"/>
    </location>
</feature>
<feature type="compositionally biased region" description="Basic and acidic residues" evidence="3">
    <location>
        <begin position="1103"/>
        <end position="1118"/>
    </location>
</feature>
<feature type="compositionally biased region" description="Basic residues" evidence="3">
    <location>
        <begin position="1119"/>
        <end position="1130"/>
    </location>
</feature>
<protein>
    <recommendedName>
        <fullName evidence="5">Male determiner protein Mdmd(III)</fullName>
    </recommendedName>
    <alternativeName>
        <fullName evidence="6">Male determiner encoded on chromosome III</fullName>
    </alternativeName>
</protein>
<dbReference type="EMBL" id="KY020049">
    <property type="protein sequence ID" value="ART29447.1"/>
    <property type="molecule type" value="Genomic_DNA"/>
</dbReference>
<dbReference type="STRING" id="7370.P0DP78"/>
<dbReference type="VEuPathDB" id="VectorBase:MDOA000598"/>
<dbReference type="VEuPathDB" id="VectorBase:MDOMA2_013059"/>
<dbReference type="Proteomes" id="UP000694905">
    <property type="component" value="Unplaced"/>
</dbReference>
<dbReference type="GO" id="GO:0071013">
    <property type="term" value="C:catalytic step 2 spliceosome"/>
    <property type="evidence" value="ECO:0007669"/>
    <property type="project" value="TreeGrafter"/>
</dbReference>
<dbReference type="GO" id="GO:0016607">
    <property type="term" value="C:nuclear speck"/>
    <property type="evidence" value="ECO:0007669"/>
    <property type="project" value="UniProtKB-SubCell"/>
</dbReference>
<dbReference type="GO" id="GO:0003723">
    <property type="term" value="F:RNA binding"/>
    <property type="evidence" value="ECO:0007669"/>
    <property type="project" value="InterPro"/>
</dbReference>
<dbReference type="GO" id="GO:0030154">
    <property type="term" value="P:cell differentiation"/>
    <property type="evidence" value="ECO:0007669"/>
    <property type="project" value="UniProtKB-KW"/>
</dbReference>
<dbReference type="GO" id="GO:0030238">
    <property type="term" value="P:male sex determination"/>
    <property type="evidence" value="ECO:0000314"/>
    <property type="project" value="UniProtKB"/>
</dbReference>
<dbReference type="GO" id="GO:0046661">
    <property type="term" value="P:male sex differentiation"/>
    <property type="evidence" value="ECO:0000314"/>
    <property type="project" value="UniProtKB"/>
</dbReference>
<dbReference type="GO" id="GO:0000398">
    <property type="term" value="P:mRNA splicing, via spliceosome"/>
    <property type="evidence" value="ECO:0007669"/>
    <property type="project" value="TreeGrafter"/>
</dbReference>
<dbReference type="GO" id="GO:0048024">
    <property type="term" value="P:regulation of mRNA splicing, via spliceosome"/>
    <property type="evidence" value="ECO:0000315"/>
    <property type="project" value="UniProtKB"/>
</dbReference>
<dbReference type="FunFam" id="1.25.40.180:FF:000004">
    <property type="entry name" value="pre-mRNA-splicing factor CWC22 homolog"/>
    <property type="match status" value="1"/>
</dbReference>
<dbReference type="Gene3D" id="1.25.40.180">
    <property type="match status" value="1"/>
</dbReference>
<dbReference type="InterPro" id="IPR016024">
    <property type="entry name" value="ARM-type_fold"/>
</dbReference>
<dbReference type="InterPro" id="IPR050781">
    <property type="entry name" value="CWC22_splicing_factor"/>
</dbReference>
<dbReference type="InterPro" id="IPR003891">
    <property type="entry name" value="Initiation_fac_eIF4g_MI"/>
</dbReference>
<dbReference type="InterPro" id="IPR003890">
    <property type="entry name" value="MIF4G-like_typ-3"/>
</dbReference>
<dbReference type="PANTHER" id="PTHR18034">
    <property type="entry name" value="CELL CYCLE CONTROL PROTEIN CWF22-RELATED"/>
    <property type="match status" value="1"/>
</dbReference>
<dbReference type="PANTHER" id="PTHR18034:SF3">
    <property type="entry name" value="PRE-MRNA-SPLICING FACTOR CWC22 HOMOLOG"/>
    <property type="match status" value="1"/>
</dbReference>
<dbReference type="Pfam" id="PF02847">
    <property type="entry name" value="MA3"/>
    <property type="match status" value="1"/>
</dbReference>
<dbReference type="SMART" id="SM00544">
    <property type="entry name" value="MA3"/>
    <property type="match status" value="1"/>
</dbReference>
<dbReference type="SMART" id="SM00543">
    <property type="entry name" value="MIF4G"/>
    <property type="match status" value="1"/>
</dbReference>
<dbReference type="SUPFAM" id="SSF48371">
    <property type="entry name" value="ARM repeat"/>
    <property type="match status" value="1"/>
</dbReference>
<dbReference type="PROSITE" id="PS51366">
    <property type="entry name" value="MI"/>
    <property type="match status" value="1"/>
</dbReference>
<accession>P0DP78</accession>
<accession>A0A1Y0AWT1</accession>
<proteinExistence type="evidence at transcript level"/>
<sequence length="1174" mass="134995">MNATDAESRKPENKPSSESSSSGSTSGSSDGEVSSKTYFKNNKSKVLSGQREVVLEVVRDLSYTICKEAEEKLVERFPRKDGSNEMLPKEDSINTNHNYTTDSNEHPVELTTKTEECKNTEKTKKKSFVRALSKDKQLSAYRSRSRSTRLSYSGHISRTHSVEKSLSRYKKSVLRNRRTSFGHGRDSSTTKRSVSRDKDNRLRRRIGSSRSHTRSHSRFRRSEKKLPSRSPRRIRSQERRHERRRSMSSDYERIALRRSEPIKRRDKDEFFKNNKKVSGDIKKGKGNDNGTVAELEAKITERQRKSLDILTSRTGGACLTPDKLRMIQAEITDKSSAAYQSIAREALKKYIHGYINKVNVDSVAVITRKLLKDNIVRGRGVLCHSIIQAQATSPTFTHVYAAMVAIINSKFPNIGELLLKRLVIQFKRAFGCNDKTVCLTSSHFIAHLVNQRVAHEILALEILTLLIESPTDDNVEVAITFLKECGMKLTEVSSDRVGGIFELLKNILHQGKLDKRVQYMIKVLFQVRRDGFKDHQSIIESLELVEEYAQFTHLLLLEDVTYPKDILNEFKFDDQYETNEEKYKALSKDILGSHASDSDGSFGSGSNSETALSDCDKVKNEVNDKYTSGDIIDETKPNLIALRRTIYLTLNSCLDYEECAQKLMKTQLKTCQQNEFCQILLDCCAEQRTYEKFYGLLTHRICKMNKSFIEPFKEIFKDICQTTHCLDTNRLRNISKFFAHLLFTDAISWDVLDCIKLTEDEAITSRCIFIKSFFQELVEYMGLYHFNKKLKTEVLAGTLAGLFPKDNPRNIRFSINFFTSIGLGGITNELCQLLKIAPKSAPSSSSSSSLSSELSAPSDDDSSSDSENKKKHKGKNKKMTKKKNPSKKKEKTKKFVGKNKIAAKNKTIKRRTDKDNSSSKDNFLKSESSSNESISLDSLSSELFAPSSYSSSESSNDSESKEKHKGKNKKMTKKKNPSNKKEKTKKKLSKNKKAPNKNTKKRMTEKDISSSESSISESKSLNCSASNQNENEKRKKRVTSKSRTKRVKMFKQCQWVDADNQRDIKRKKRAEYRYEPLVYRKRNEECLKKGAPNCXKDNYGNRQNHEISQRHDSEIKRRREERKKRHHEKNHSREYKRSKLGLCQREYFLYMCCQFYYPCTFQCLCQNCHFTFYS</sequence>
<keyword id="KW-0221">Differentiation</keyword>
<keyword id="KW-0507">mRNA processing</keyword>
<keyword id="KW-0508">mRNA splicing</keyword>
<keyword id="KW-0539">Nucleus</keyword>
<keyword id="KW-1185">Reference proteome</keyword>
<keyword id="KW-0726">Sexual differentiation</keyword>
<reference key="1">
    <citation type="journal article" date="2017" name="Science">
        <title>Male sex in houseflies is determined by Mdmd, a paralog of the generic splice factor gene CWC22.</title>
        <authorList>
            <person name="Sharma A."/>
            <person name="Heinze S.D."/>
            <person name="Wu Y."/>
            <person name="Kohlbrenner T."/>
            <person name="Morilla I."/>
            <person name="Brunner C."/>
            <person name="Wimmer E.A."/>
            <person name="van de Zande L."/>
            <person name="Robinson M.D."/>
            <person name="Beukeboom L.W."/>
            <person name="Bopp D."/>
        </authorList>
    </citation>
    <scope>NUCLEOTIDE SEQUENCE [GENOMIC DNA]</scope>
    <scope>FUNCTION</scope>
    <scope>DEVELOPMENTAL STAGE</scope>
    <scope>DISRUPTION PHENOTYPE</scope>
</reference>
<organism>
    <name type="scientific">Musca domestica</name>
    <name type="common">House fly</name>
    <dbReference type="NCBI Taxonomy" id="7370"/>
    <lineage>
        <taxon>Eukaryota</taxon>
        <taxon>Metazoa</taxon>
        <taxon>Ecdysozoa</taxon>
        <taxon>Arthropoda</taxon>
        <taxon>Hexapoda</taxon>
        <taxon>Insecta</taxon>
        <taxon>Pterygota</taxon>
        <taxon>Neoptera</taxon>
        <taxon>Endopterygota</taxon>
        <taxon>Diptera</taxon>
        <taxon>Brachycera</taxon>
        <taxon>Muscomorpha</taxon>
        <taxon>Muscoidea</taxon>
        <taxon>Muscidae</taxon>
        <taxon>Musca</taxon>
    </lineage>
</organism>
<gene>
    <name evidence="5" type="primary">Mdmd</name>
</gene>
<name>MDIII_MUSDO</name>
<comment type="function">
    <text evidence="1 4">Male determiner protein (M-factor) that controls male somatic sexual differentiation (PubMed:28495751). Acts as a dominant factor that regulates the mRNA splicing of transformer (tra) and doublesex (dsx) transcripts and promotes expression of male splice forms of tra and dsx (PubMed:28495751). Probably acts as a component of the spliceosome C complex required for mRNA splicing factor and exon-junction complex (EJC) assembly (By similarity). Hinders eIF4AIII from non-specifically binding RNA and escorts it to the splicing machinery to promote EJC assembly on mature mRNAs (By similarity).</text>
</comment>
<comment type="subunit">
    <text evidence="1">Component of the spliceosome C complex.</text>
</comment>
<comment type="subcellular location">
    <subcellularLocation>
        <location evidence="1">Nucleus speckle</location>
    </subcellularLocation>
</comment>
<comment type="developmental stage">
    <text evidence="4">Specifically expressed in early male embryos. Zygotic expression first appears in 2- to 3-hour-old embryos (cellularized blastoderm stage). Expression is then maintained throughout male development until adulthood.</text>
</comment>
<comment type="disruption phenotype">
    <text evidence="4">Complete sex reversal to fertile females because flies exclusively express the female splice variants of transformer (tra) and doublesex (dsx).</text>
</comment>
<comment type="miscellaneous">
    <text evidence="4">The M.domestica genome only codes for one male determiner Mdmd protein, which is encoded in the M region, and can be located at different loci on the genome (chromosomes II, III, V or Y). The M region contains a cluster of tandemly repeated Mdmd copies with only one intact copy: other copies are degenerate with large truncations and frameshifts and are assumed to be non-functional. The presence of multiple copies in the M region may preserve its integrity in a hostile non-recombining environment. This protein is encoded on chromosome III.</text>
</comment>
<comment type="similarity">
    <text evidence="6">Belongs to the CWC22 family.</text>
</comment>
<comment type="online information" name="Protein Spotlight">
    <link uri="https://www.proteinspotlight.org/back_issues/201/"/>
    <text>It's a thin line - Issue 201 of March 2018</text>
</comment>
<evidence type="ECO:0000250" key="1">
    <source>
        <dbReference type="UniProtKB" id="Q9HCG8"/>
    </source>
</evidence>
<evidence type="ECO:0000255" key="2">
    <source>
        <dbReference type="PROSITE-ProRule" id="PRU00698"/>
    </source>
</evidence>
<evidence type="ECO:0000256" key="3">
    <source>
        <dbReference type="SAM" id="MobiDB-lite"/>
    </source>
</evidence>
<evidence type="ECO:0000269" key="4">
    <source>
    </source>
</evidence>
<evidence type="ECO:0000303" key="5">
    <source>
    </source>
</evidence>
<evidence type="ECO:0000305" key="6"/>